<organism>
    <name type="scientific">Xanthomonas euvesicatoria pv. vesicatoria (strain 85-10)</name>
    <name type="common">Xanthomonas campestris pv. vesicatoria</name>
    <dbReference type="NCBI Taxonomy" id="316273"/>
    <lineage>
        <taxon>Bacteria</taxon>
        <taxon>Pseudomonadati</taxon>
        <taxon>Pseudomonadota</taxon>
        <taxon>Gammaproteobacteria</taxon>
        <taxon>Lysobacterales</taxon>
        <taxon>Lysobacteraceae</taxon>
        <taxon>Xanthomonas</taxon>
    </lineage>
</organism>
<name>SYE_XANE5</name>
<accession>Q3BR75</accession>
<dbReference type="EC" id="6.1.1.17" evidence="1"/>
<dbReference type="EMBL" id="AM039952">
    <property type="protein sequence ID" value="CAJ24707.1"/>
    <property type="molecule type" value="Genomic_DNA"/>
</dbReference>
<dbReference type="RefSeq" id="WP_011348061.1">
    <property type="nucleotide sequence ID" value="NZ_CP017190.1"/>
</dbReference>
<dbReference type="SMR" id="Q3BR75"/>
<dbReference type="STRING" id="456327.BJD11_07830"/>
<dbReference type="KEGG" id="xcv:XCV3007"/>
<dbReference type="eggNOG" id="COG0008">
    <property type="taxonomic scope" value="Bacteria"/>
</dbReference>
<dbReference type="HOGENOM" id="CLU_015768_6_0_6"/>
<dbReference type="Proteomes" id="UP000007069">
    <property type="component" value="Chromosome"/>
</dbReference>
<dbReference type="GO" id="GO:0005829">
    <property type="term" value="C:cytosol"/>
    <property type="evidence" value="ECO:0007669"/>
    <property type="project" value="TreeGrafter"/>
</dbReference>
<dbReference type="GO" id="GO:0005524">
    <property type="term" value="F:ATP binding"/>
    <property type="evidence" value="ECO:0007669"/>
    <property type="project" value="UniProtKB-UniRule"/>
</dbReference>
<dbReference type="GO" id="GO:0004818">
    <property type="term" value="F:glutamate-tRNA ligase activity"/>
    <property type="evidence" value="ECO:0007669"/>
    <property type="project" value="UniProtKB-UniRule"/>
</dbReference>
<dbReference type="GO" id="GO:0000049">
    <property type="term" value="F:tRNA binding"/>
    <property type="evidence" value="ECO:0007669"/>
    <property type="project" value="InterPro"/>
</dbReference>
<dbReference type="GO" id="GO:0008270">
    <property type="term" value="F:zinc ion binding"/>
    <property type="evidence" value="ECO:0007669"/>
    <property type="project" value="InterPro"/>
</dbReference>
<dbReference type="GO" id="GO:0006424">
    <property type="term" value="P:glutamyl-tRNA aminoacylation"/>
    <property type="evidence" value="ECO:0007669"/>
    <property type="project" value="UniProtKB-UniRule"/>
</dbReference>
<dbReference type="CDD" id="cd00808">
    <property type="entry name" value="GluRS_core"/>
    <property type="match status" value="1"/>
</dbReference>
<dbReference type="FunFam" id="3.40.50.620:FF:000007">
    <property type="entry name" value="Glutamate--tRNA ligase"/>
    <property type="match status" value="1"/>
</dbReference>
<dbReference type="Gene3D" id="1.10.10.350">
    <property type="match status" value="1"/>
</dbReference>
<dbReference type="Gene3D" id="3.40.50.620">
    <property type="entry name" value="HUPs"/>
    <property type="match status" value="1"/>
</dbReference>
<dbReference type="HAMAP" id="MF_00022">
    <property type="entry name" value="Glu_tRNA_synth_type1"/>
    <property type="match status" value="1"/>
</dbReference>
<dbReference type="InterPro" id="IPR045462">
    <property type="entry name" value="aa-tRNA-synth_I_cd-bd"/>
</dbReference>
<dbReference type="InterPro" id="IPR020751">
    <property type="entry name" value="aa-tRNA-synth_I_codon-bd_sub2"/>
</dbReference>
<dbReference type="InterPro" id="IPR001412">
    <property type="entry name" value="aa-tRNA-synth_I_CS"/>
</dbReference>
<dbReference type="InterPro" id="IPR008925">
    <property type="entry name" value="aa_tRNA-synth_I_cd-bd_sf"/>
</dbReference>
<dbReference type="InterPro" id="IPR004527">
    <property type="entry name" value="Glu-tRNA-ligase_bac/mito"/>
</dbReference>
<dbReference type="InterPro" id="IPR000924">
    <property type="entry name" value="Glu/Gln-tRNA-synth"/>
</dbReference>
<dbReference type="InterPro" id="IPR020058">
    <property type="entry name" value="Glu/Gln-tRNA-synth_Ib_cat-dom"/>
</dbReference>
<dbReference type="InterPro" id="IPR049940">
    <property type="entry name" value="GluQ/Sye"/>
</dbReference>
<dbReference type="InterPro" id="IPR033910">
    <property type="entry name" value="GluRS_core"/>
</dbReference>
<dbReference type="InterPro" id="IPR014729">
    <property type="entry name" value="Rossmann-like_a/b/a_fold"/>
</dbReference>
<dbReference type="NCBIfam" id="TIGR00464">
    <property type="entry name" value="gltX_bact"/>
    <property type="match status" value="1"/>
</dbReference>
<dbReference type="PANTHER" id="PTHR43311">
    <property type="entry name" value="GLUTAMATE--TRNA LIGASE"/>
    <property type="match status" value="1"/>
</dbReference>
<dbReference type="PANTHER" id="PTHR43311:SF2">
    <property type="entry name" value="GLUTAMATE--TRNA LIGASE, MITOCHONDRIAL-RELATED"/>
    <property type="match status" value="1"/>
</dbReference>
<dbReference type="Pfam" id="PF19269">
    <property type="entry name" value="Anticodon_2"/>
    <property type="match status" value="1"/>
</dbReference>
<dbReference type="Pfam" id="PF00749">
    <property type="entry name" value="tRNA-synt_1c"/>
    <property type="match status" value="1"/>
</dbReference>
<dbReference type="PRINTS" id="PR00987">
    <property type="entry name" value="TRNASYNTHGLU"/>
</dbReference>
<dbReference type="SUPFAM" id="SSF48163">
    <property type="entry name" value="An anticodon-binding domain of class I aminoacyl-tRNA synthetases"/>
    <property type="match status" value="1"/>
</dbReference>
<dbReference type="SUPFAM" id="SSF52374">
    <property type="entry name" value="Nucleotidylyl transferase"/>
    <property type="match status" value="1"/>
</dbReference>
<dbReference type="PROSITE" id="PS00178">
    <property type="entry name" value="AA_TRNA_LIGASE_I"/>
    <property type="match status" value="1"/>
</dbReference>
<comment type="function">
    <text evidence="1">Catalyzes the attachment of glutamate to tRNA(Glu) in a two-step reaction: glutamate is first activated by ATP to form Glu-AMP and then transferred to the acceptor end of tRNA(Glu).</text>
</comment>
<comment type="catalytic activity">
    <reaction evidence="1">
        <text>tRNA(Glu) + L-glutamate + ATP = L-glutamyl-tRNA(Glu) + AMP + diphosphate</text>
        <dbReference type="Rhea" id="RHEA:23540"/>
        <dbReference type="Rhea" id="RHEA-COMP:9663"/>
        <dbReference type="Rhea" id="RHEA-COMP:9680"/>
        <dbReference type="ChEBI" id="CHEBI:29985"/>
        <dbReference type="ChEBI" id="CHEBI:30616"/>
        <dbReference type="ChEBI" id="CHEBI:33019"/>
        <dbReference type="ChEBI" id="CHEBI:78442"/>
        <dbReference type="ChEBI" id="CHEBI:78520"/>
        <dbReference type="ChEBI" id="CHEBI:456215"/>
        <dbReference type="EC" id="6.1.1.17"/>
    </reaction>
</comment>
<comment type="subunit">
    <text evidence="1">Monomer.</text>
</comment>
<comment type="subcellular location">
    <subcellularLocation>
        <location evidence="1">Cytoplasm</location>
    </subcellularLocation>
</comment>
<comment type="similarity">
    <text evidence="1">Belongs to the class-I aminoacyl-tRNA synthetase family. Glutamate--tRNA ligase type 1 subfamily.</text>
</comment>
<gene>
    <name evidence="1" type="primary">gltX</name>
    <name type="ordered locus">XCV3007</name>
</gene>
<evidence type="ECO:0000255" key="1">
    <source>
        <dbReference type="HAMAP-Rule" id="MF_00022"/>
    </source>
</evidence>
<feature type="chain" id="PRO_0000237420" description="Glutamate--tRNA ligase">
    <location>
        <begin position="1"/>
        <end position="467"/>
    </location>
</feature>
<feature type="short sequence motif" description="'HIGH' region" evidence="1">
    <location>
        <begin position="9"/>
        <end position="19"/>
    </location>
</feature>
<feature type="short sequence motif" description="'KMSKS' region" evidence="1">
    <location>
        <begin position="237"/>
        <end position="241"/>
    </location>
</feature>
<feature type="binding site" evidence="1">
    <location>
        <position position="240"/>
    </location>
    <ligand>
        <name>ATP</name>
        <dbReference type="ChEBI" id="CHEBI:30616"/>
    </ligand>
</feature>
<reference key="1">
    <citation type="journal article" date="2005" name="J. Bacteriol.">
        <title>Insights into genome plasticity and pathogenicity of the plant pathogenic Bacterium Xanthomonas campestris pv. vesicatoria revealed by the complete genome sequence.</title>
        <authorList>
            <person name="Thieme F."/>
            <person name="Koebnik R."/>
            <person name="Bekel T."/>
            <person name="Berger C."/>
            <person name="Boch J."/>
            <person name="Buettner D."/>
            <person name="Caldana C."/>
            <person name="Gaigalat L."/>
            <person name="Goesmann A."/>
            <person name="Kay S."/>
            <person name="Kirchner O."/>
            <person name="Lanz C."/>
            <person name="Linke B."/>
            <person name="McHardy A.C."/>
            <person name="Meyer F."/>
            <person name="Mittenhuber G."/>
            <person name="Nies D.H."/>
            <person name="Niesbach-Kloesgen U."/>
            <person name="Patschkowski T."/>
            <person name="Rueckert C."/>
            <person name="Rupp O."/>
            <person name="Schneiker S."/>
            <person name="Schuster S.C."/>
            <person name="Vorhoelter F.J."/>
            <person name="Weber E."/>
            <person name="Puehler A."/>
            <person name="Bonas U."/>
            <person name="Bartels D."/>
            <person name="Kaiser O."/>
        </authorList>
    </citation>
    <scope>NUCLEOTIDE SEQUENCE [LARGE SCALE GENOMIC DNA]</scope>
    <source>
        <strain>85-10</strain>
    </source>
</reference>
<proteinExistence type="inferred from homology"/>
<sequence>MTCRTRFAPSPTGYLHIGGARTALYCWLEARHRGGQFVLRIEDTDRERSTQAAIDAILEAMDWLGLGYDEGPIYQTQRIARYQEVAEQLLAQGKAYYAYETREELDAMREAAMAKQEKPRFNGAAREQNLPYRDDPNRVIRFKNPIGGTVVFEDLIKGCIEIANSELDDMVIFRPDGFPTYNFAVVVDDWDMGITEVIRGDDHINNTPRQINIYEALGAPVPRFAHMPMILDEQGAKLSKRTGAADVMQYKDAGYLPHALINYLARLGWSHGDQELFTRQELLDLFDVKDVNSKAARLDMAKLGWVNQHYLKTDDPASIAPQLEYQLAKLGVDIAAGPAAADVVVALRERVQTLKEMAEKAVVWYQPLETYDEAAVMKHLKLGAEVPLGKARELLAAVDAWSVENVSAALHDAAAALELGMGKIAQPLRVAITGTQVSPDISQTVYLAGREGALKRIDAALIKIGAA</sequence>
<protein>
    <recommendedName>
        <fullName evidence="1">Glutamate--tRNA ligase</fullName>
        <ecNumber evidence="1">6.1.1.17</ecNumber>
    </recommendedName>
    <alternativeName>
        <fullName evidence="1">Glutamyl-tRNA synthetase</fullName>
        <shortName evidence="1">GluRS</shortName>
    </alternativeName>
</protein>
<keyword id="KW-0030">Aminoacyl-tRNA synthetase</keyword>
<keyword id="KW-0067">ATP-binding</keyword>
<keyword id="KW-0963">Cytoplasm</keyword>
<keyword id="KW-0436">Ligase</keyword>
<keyword id="KW-0547">Nucleotide-binding</keyword>
<keyword id="KW-0648">Protein biosynthesis</keyword>